<sequence length="96" mass="10817">MSAKIVVEVAYALPEKQYLQRVTLQEGATVEEAIRASGLLELRTDIDLAKNKVGIYSRPTKLADVVHDGDRVEIYRPLIADPKELRRQRAEKSANK</sequence>
<feature type="chain" id="PRO_1000013571" description="Protein RnfH">
    <location>
        <begin position="1"/>
        <end position="96"/>
    </location>
</feature>
<organism>
    <name type="scientific">Citrobacter koseri (strain ATCC BAA-895 / CDC 4225-83 / SGSC4696)</name>
    <dbReference type="NCBI Taxonomy" id="290338"/>
    <lineage>
        <taxon>Bacteria</taxon>
        <taxon>Pseudomonadati</taxon>
        <taxon>Pseudomonadota</taxon>
        <taxon>Gammaproteobacteria</taxon>
        <taxon>Enterobacterales</taxon>
        <taxon>Enterobacteriaceae</taxon>
        <taxon>Citrobacter</taxon>
    </lineage>
</organism>
<keyword id="KW-1185">Reference proteome</keyword>
<reference key="1">
    <citation type="submission" date="2007-08" db="EMBL/GenBank/DDBJ databases">
        <authorList>
            <consortium name="The Citrobacter koseri Genome Sequencing Project"/>
            <person name="McClelland M."/>
            <person name="Sanderson E.K."/>
            <person name="Porwollik S."/>
            <person name="Spieth J."/>
            <person name="Clifton W.S."/>
            <person name="Latreille P."/>
            <person name="Courtney L."/>
            <person name="Wang C."/>
            <person name="Pepin K."/>
            <person name="Bhonagiri V."/>
            <person name="Nash W."/>
            <person name="Johnson M."/>
            <person name="Thiruvilangam P."/>
            <person name="Wilson R."/>
        </authorList>
    </citation>
    <scope>NUCLEOTIDE SEQUENCE [LARGE SCALE GENOMIC DNA]</scope>
    <source>
        <strain>ATCC BAA-895 / CDC 4225-83 / SGSC4696</strain>
    </source>
</reference>
<comment type="similarity">
    <text evidence="1">Belongs to the UPF0125 (RnfH) family.</text>
</comment>
<dbReference type="EMBL" id="CP000822">
    <property type="protein sequence ID" value="ABV15013.1"/>
    <property type="molecule type" value="Genomic_DNA"/>
</dbReference>
<dbReference type="RefSeq" id="WP_012134706.1">
    <property type="nucleotide sequence ID" value="NC_009792.1"/>
</dbReference>
<dbReference type="SMR" id="A8ANF0"/>
<dbReference type="STRING" id="290338.CKO_03940"/>
<dbReference type="GeneID" id="45137602"/>
<dbReference type="KEGG" id="cko:CKO_03940"/>
<dbReference type="HOGENOM" id="CLU_150721_1_0_6"/>
<dbReference type="OrthoDB" id="9796575at2"/>
<dbReference type="Proteomes" id="UP000008148">
    <property type="component" value="Chromosome"/>
</dbReference>
<dbReference type="Gene3D" id="3.10.20.280">
    <property type="entry name" value="RnfH-like"/>
    <property type="match status" value="1"/>
</dbReference>
<dbReference type="HAMAP" id="MF_00460">
    <property type="entry name" value="UPF0125_RnfH"/>
    <property type="match status" value="1"/>
</dbReference>
<dbReference type="InterPro" id="IPR016155">
    <property type="entry name" value="Mopterin_synth/thiamin_S_b"/>
</dbReference>
<dbReference type="InterPro" id="IPR005346">
    <property type="entry name" value="RnfH"/>
</dbReference>
<dbReference type="InterPro" id="IPR037021">
    <property type="entry name" value="RnfH_sf"/>
</dbReference>
<dbReference type="NCBIfam" id="NF002490">
    <property type="entry name" value="PRK01777.1"/>
    <property type="match status" value="1"/>
</dbReference>
<dbReference type="PANTHER" id="PTHR37483">
    <property type="entry name" value="UPF0125 PROTEIN RATB"/>
    <property type="match status" value="1"/>
</dbReference>
<dbReference type="PANTHER" id="PTHR37483:SF1">
    <property type="entry name" value="UPF0125 PROTEIN RATB"/>
    <property type="match status" value="1"/>
</dbReference>
<dbReference type="Pfam" id="PF03658">
    <property type="entry name" value="Ub-RnfH"/>
    <property type="match status" value="1"/>
</dbReference>
<dbReference type="SUPFAM" id="SSF54285">
    <property type="entry name" value="MoaD/ThiS"/>
    <property type="match status" value="1"/>
</dbReference>
<name>RNFH_CITK8</name>
<protein>
    <recommendedName>
        <fullName evidence="1">Protein RnfH</fullName>
    </recommendedName>
</protein>
<gene>
    <name evidence="1" type="primary">rnfH</name>
    <name type="ordered locus">CKO_03940</name>
</gene>
<accession>A8ANF0</accession>
<evidence type="ECO:0000255" key="1">
    <source>
        <dbReference type="HAMAP-Rule" id="MF_00460"/>
    </source>
</evidence>
<proteinExistence type="inferred from homology"/>